<accession>Q6DGQ0</accession>
<feature type="chain" id="PRO_0000210330" description="Transcription elongation factor SPT4">
    <location>
        <begin position="1"/>
        <end position="117"/>
    </location>
</feature>
<feature type="zinc finger region" description="C4-type" evidence="2">
    <location>
        <begin position="16"/>
        <end position="36"/>
    </location>
</feature>
<feature type="region of interest" description="Interaction with SUPT5H" evidence="1">
    <location>
        <begin position="1"/>
        <end position="40"/>
    </location>
</feature>
<comment type="function">
    <text evidence="1">May function as a component of the DRB sensitivity-inducing factor complex (DSIF complex), which regulates transcription elongation by RNA polymerase II. Probably enhances transcriptional pausing at sites proximal to the promoter, which may facilitate the assembly of an elongation competent RNA polymerase II complex. Also acts to stimulate transcriptional elongation at low nucleotide concentrations. Regulation of transcriptional elongation by this protein is required for the expression of genes which control neuronal development (By similarity).</text>
</comment>
<comment type="subunit">
    <text evidence="1">Interacts with SUPT5H to form the DSIF complex. DSIF interacts with RNA polymerase II and with the positive transcription elongation factor b complex (P-TEFb complex), which is composed of CDK9 and cyclin-T (By similarity).</text>
</comment>
<comment type="subcellular location">
    <subcellularLocation>
        <location evidence="1">Nucleus</location>
    </subcellularLocation>
</comment>
<comment type="similarity">
    <text evidence="3">Belongs to the SPT4 family.</text>
</comment>
<gene>
    <name type="primary">supt4h1</name>
    <name type="ORF">zgc:92824</name>
</gene>
<protein>
    <recommendedName>
        <fullName>Transcription elongation factor SPT4</fullName>
    </recommendedName>
    <alternativeName>
        <fullName>DRB sensitivity-inducing factor small subunit</fullName>
        <shortName>DSIF small subunit</shortName>
    </alternativeName>
</protein>
<evidence type="ECO:0000250" key="1"/>
<evidence type="ECO:0000255" key="2"/>
<evidence type="ECO:0000305" key="3"/>
<proteinExistence type="inferred from homology"/>
<reference key="1">
    <citation type="submission" date="2004-07" db="EMBL/GenBank/DDBJ databases">
        <authorList>
            <consortium name="NIH - Zebrafish Gene Collection (ZGC) project"/>
        </authorList>
    </citation>
    <scope>NUCLEOTIDE SEQUENCE [LARGE SCALE MRNA]</scope>
    <source>
        <tissue>Brain</tissue>
    </source>
</reference>
<dbReference type="EMBL" id="BC076290">
    <property type="protein sequence ID" value="AAH76290.1"/>
    <property type="molecule type" value="mRNA"/>
</dbReference>
<dbReference type="RefSeq" id="NP_001002509.1">
    <property type="nucleotide sequence ID" value="NM_001002509.1"/>
</dbReference>
<dbReference type="SMR" id="Q6DGQ0"/>
<dbReference type="FunCoup" id="Q6DGQ0">
    <property type="interactions" value="1542"/>
</dbReference>
<dbReference type="STRING" id="7955.ENSDARP00000147232"/>
<dbReference type="PaxDb" id="7955-ENSDARP00000048842"/>
<dbReference type="Ensembl" id="ENSDART00000179809">
    <property type="protein sequence ID" value="ENSDARP00000147232"/>
    <property type="gene ID" value="ENSDARG00000113969"/>
</dbReference>
<dbReference type="GeneID" id="436782"/>
<dbReference type="KEGG" id="dre:436782"/>
<dbReference type="AGR" id="ZFIN:ZDB-GENE-040718-214"/>
<dbReference type="CTD" id="6827"/>
<dbReference type="ZFIN" id="ZDB-GENE-040718-214">
    <property type="gene designation" value="supt4h1"/>
</dbReference>
<dbReference type="eggNOG" id="KOG3490">
    <property type="taxonomic scope" value="Eukaryota"/>
</dbReference>
<dbReference type="InParanoid" id="Q6DGQ0"/>
<dbReference type="OMA" id="FDGMIAV"/>
<dbReference type="OrthoDB" id="248751at2759"/>
<dbReference type="PhylomeDB" id="Q6DGQ0"/>
<dbReference type="TreeFam" id="TF300105"/>
<dbReference type="Reactome" id="R-DRE-674695">
    <property type="pathway name" value="RNA Polymerase II Pre-transcription Events"/>
</dbReference>
<dbReference type="Reactome" id="R-DRE-6796648">
    <property type="pathway name" value="TP53 Regulates Transcription of DNA Repair Genes"/>
</dbReference>
<dbReference type="PRO" id="PR:Q6DGQ0"/>
<dbReference type="Proteomes" id="UP000000437">
    <property type="component" value="Chromosome 5"/>
</dbReference>
<dbReference type="Bgee" id="ENSDARG00000113969">
    <property type="expression patterns" value="Expressed in mature ovarian follicle and 21 other cell types or tissues"/>
</dbReference>
<dbReference type="GO" id="GO:0032044">
    <property type="term" value="C:DSIF complex"/>
    <property type="evidence" value="ECO:0000250"/>
    <property type="project" value="UniProtKB"/>
</dbReference>
<dbReference type="GO" id="GO:0000993">
    <property type="term" value="F:RNA polymerase II complex binding"/>
    <property type="evidence" value="ECO:0000318"/>
    <property type="project" value="GO_Central"/>
</dbReference>
<dbReference type="GO" id="GO:0008270">
    <property type="term" value="F:zinc ion binding"/>
    <property type="evidence" value="ECO:0007669"/>
    <property type="project" value="UniProtKB-KW"/>
</dbReference>
<dbReference type="GO" id="GO:0006355">
    <property type="term" value="P:regulation of DNA-templated transcription"/>
    <property type="evidence" value="ECO:0007669"/>
    <property type="project" value="InterPro"/>
</dbReference>
<dbReference type="GO" id="GO:0006368">
    <property type="term" value="P:transcription elongation by RNA polymerase II"/>
    <property type="evidence" value="ECO:0000318"/>
    <property type="project" value="GO_Central"/>
</dbReference>
<dbReference type="GO" id="GO:0140673">
    <property type="term" value="P:transcription elongation-coupled chromatin remodeling"/>
    <property type="evidence" value="ECO:0007669"/>
    <property type="project" value="InterPro"/>
</dbReference>
<dbReference type="CDD" id="cd07973">
    <property type="entry name" value="Spt4"/>
    <property type="match status" value="1"/>
</dbReference>
<dbReference type="FunFam" id="3.30.40.210:FF:000001">
    <property type="entry name" value="Transcription elongation factor SPT4"/>
    <property type="match status" value="1"/>
</dbReference>
<dbReference type="Gene3D" id="3.30.40.210">
    <property type="match status" value="1"/>
</dbReference>
<dbReference type="InterPro" id="IPR029040">
    <property type="entry name" value="RPABC4/Spt4"/>
</dbReference>
<dbReference type="InterPro" id="IPR009287">
    <property type="entry name" value="Spt4"/>
</dbReference>
<dbReference type="InterPro" id="IPR022800">
    <property type="entry name" value="Spt4/RpoE2_Znf"/>
</dbReference>
<dbReference type="InterPro" id="IPR038510">
    <property type="entry name" value="Spt4_sf"/>
</dbReference>
<dbReference type="PANTHER" id="PTHR12882">
    <property type="entry name" value="SUPPRESSOR OF TY 4"/>
    <property type="match status" value="1"/>
</dbReference>
<dbReference type="PANTHER" id="PTHR12882:SF1">
    <property type="entry name" value="TRANSCRIPTION ELONGATION FACTOR SPT4"/>
    <property type="match status" value="1"/>
</dbReference>
<dbReference type="Pfam" id="PF06093">
    <property type="entry name" value="Spt4"/>
    <property type="match status" value="1"/>
</dbReference>
<dbReference type="PIRSF" id="PIRSF025023">
    <property type="entry name" value="Spt4"/>
    <property type="match status" value="1"/>
</dbReference>
<dbReference type="SMART" id="SM01389">
    <property type="entry name" value="Spt4"/>
    <property type="match status" value="1"/>
</dbReference>
<dbReference type="SUPFAM" id="SSF63393">
    <property type="entry name" value="RNA polymerase subunits"/>
    <property type="match status" value="1"/>
</dbReference>
<sequence>MSLETVPKDLRHLRACLLCSLVKTIDQFEYDGCDNCESYLQMKGNREMVYECTSSSFDGVIAMMSPEDSWVAKWQRIGNFKPGVYAVTVTGRLPPGVVRELKSRGVIYRSRDTAVKT</sequence>
<keyword id="KW-0010">Activator</keyword>
<keyword id="KW-0479">Metal-binding</keyword>
<keyword id="KW-0539">Nucleus</keyword>
<keyword id="KW-1185">Reference proteome</keyword>
<keyword id="KW-0678">Repressor</keyword>
<keyword id="KW-0804">Transcription</keyword>
<keyword id="KW-0805">Transcription regulation</keyword>
<keyword id="KW-0862">Zinc</keyword>
<keyword id="KW-0863">Zinc-finger</keyword>
<organism>
    <name type="scientific">Danio rerio</name>
    <name type="common">Zebrafish</name>
    <name type="synonym">Brachydanio rerio</name>
    <dbReference type="NCBI Taxonomy" id="7955"/>
    <lineage>
        <taxon>Eukaryota</taxon>
        <taxon>Metazoa</taxon>
        <taxon>Chordata</taxon>
        <taxon>Craniata</taxon>
        <taxon>Vertebrata</taxon>
        <taxon>Euteleostomi</taxon>
        <taxon>Actinopterygii</taxon>
        <taxon>Neopterygii</taxon>
        <taxon>Teleostei</taxon>
        <taxon>Ostariophysi</taxon>
        <taxon>Cypriniformes</taxon>
        <taxon>Danionidae</taxon>
        <taxon>Danioninae</taxon>
        <taxon>Danio</taxon>
    </lineage>
</organism>
<name>SPT4H_DANRE</name>